<accession>A0Q109</accession>
<feature type="chain" id="PRO_1000188056" description="Small ribosomal subunit biogenesis GTPase RsgA">
    <location>
        <begin position="1"/>
        <end position="290"/>
    </location>
</feature>
<feature type="domain" description="CP-type G" evidence="2">
    <location>
        <begin position="62"/>
        <end position="219"/>
    </location>
</feature>
<feature type="binding site" evidence="1">
    <location>
        <begin position="111"/>
        <end position="114"/>
    </location>
    <ligand>
        <name>GTP</name>
        <dbReference type="ChEBI" id="CHEBI:37565"/>
    </ligand>
</feature>
<feature type="binding site" evidence="1">
    <location>
        <begin position="162"/>
        <end position="170"/>
    </location>
    <ligand>
        <name>GTP</name>
        <dbReference type="ChEBI" id="CHEBI:37565"/>
    </ligand>
</feature>
<feature type="binding site" evidence="1">
    <location>
        <position position="243"/>
    </location>
    <ligand>
        <name>Zn(2+)</name>
        <dbReference type="ChEBI" id="CHEBI:29105"/>
    </ligand>
</feature>
<feature type="binding site" evidence="1">
    <location>
        <position position="248"/>
    </location>
    <ligand>
        <name>Zn(2+)</name>
        <dbReference type="ChEBI" id="CHEBI:29105"/>
    </ligand>
</feature>
<feature type="binding site" evidence="1">
    <location>
        <position position="250"/>
    </location>
    <ligand>
        <name>Zn(2+)</name>
        <dbReference type="ChEBI" id="CHEBI:29105"/>
    </ligand>
</feature>
<feature type="binding site" evidence="1">
    <location>
        <position position="256"/>
    </location>
    <ligand>
        <name>Zn(2+)</name>
        <dbReference type="ChEBI" id="CHEBI:29105"/>
    </ligand>
</feature>
<comment type="function">
    <text evidence="1">One of several proteins that assist in the late maturation steps of the functional core of the 30S ribosomal subunit. Helps release RbfA from mature subunits. May play a role in the assembly of ribosomal proteins into the subunit. Circularly permuted GTPase that catalyzes slow GTP hydrolysis, GTPase activity is stimulated by the 30S ribosomal subunit.</text>
</comment>
<comment type="cofactor">
    <cofactor evidence="1">
        <name>Zn(2+)</name>
        <dbReference type="ChEBI" id="CHEBI:29105"/>
    </cofactor>
    <text evidence="1">Binds 1 zinc ion per subunit.</text>
</comment>
<comment type="subunit">
    <text evidence="1">Monomer. Associates with 30S ribosomal subunit, binds 16S rRNA.</text>
</comment>
<comment type="subcellular location">
    <subcellularLocation>
        <location evidence="1">Cytoplasm</location>
    </subcellularLocation>
</comment>
<comment type="similarity">
    <text evidence="1">Belongs to the TRAFAC class YlqF/YawG GTPase family. RsgA subfamily.</text>
</comment>
<reference key="1">
    <citation type="journal article" date="2006" name="Nat. Biotechnol.">
        <title>The genome and transcriptomes of the anti-tumor agent Clostridium novyi-NT.</title>
        <authorList>
            <person name="Bettegowda C."/>
            <person name="Huang X."/>
            <person name="Lin J."/>
            <person name="Cheong I."/>
            <person name="Kohli M."/>
            <person name="Szabo S.A."/>
            <person name="Zhang X."/>
            <person name="Diaz L.A. Jr."/>
            <person name="Velculescu V.E."/>
            <person name="Parmigiani G."/>
            <person name="Kinzler K.W."/>
            <person name="Vogelstein B."/>
            <person name="Zhou S."/>
        </authorList>
    </citation>
    <scope>NUCLEOTIDE SEQUENCE [LARGE SCALE GENOMIC DNA]</scope>
    <source>
        <strain>NT</strain>
    </source>
</reference>
<keyword id="KW-0963">Cytoplasm</keyword>
<keyword id="KW-0342">GTP-binding</keyword>
<keyword id="KW-0378">Hydrolase</keyword>
<keyword id="KW-0479">Metal-binding</keyword>
<keyword id="KW-0547">Nucleotide-binding</keyword>
<keyword id="KW-1185">Reference proteome</keyword>
<keyword id="KW-0690">Ribosome biogenesis</keyword>
<keyword id="KW-0694">RNA-binding</keyword>
<keyword id="KW-0699">rRNA-binding</keyword>
<keyword id="KW-0862">Zinc</keyword>
<name>RSGA_CLONN</name>
<protein>
    <recommendedName>
        <fullName evidence="1">Small ribosomal subunit biogenesis GTPase RsgA</fullName>
        <ecNumber evidence="1">3.6.1.-</ecNumber>
    </recommendedName>
</protein>
<gene>
    <name evidence="1" type="primary">rsgA</name>
    <name type="ordered locus">NT01CX_2238</name>
</gene>
<dbReference type="EC" id="3.6.1.-" evidence="1"/>
<dbReference type="EMBL" id="CP000382">
    <property type="protein sequence ID" value="ABK61828.1"/>
    <property type="molecule type" value="Genomic_DNA"/>
</dbReference>
<dbReference type="RefSeq" id="WP_011722308.1">
    <property type="nucleotide sequence ID" value="NC_008593.1"/>
</dbReference>
<dbReference type="SMR" id="A0Q109"/>
<dbReference type="STRING" id="386415.NT01CX_2238"/>
<dbReference type="KEGG" id="cno:NT01CX_2238"/>
<dbReference type="eggNOG" id="COG1162">
    <property type="taxonomic scope" value="Bacteria"/>
</dbReference>
<dbReference type="HOGENOM" id="CLU_033617_2_1_9"/>
<dbReference type="Proteomes" id="UP000008220">
    <property type="component" value="Chromosome"/>
</dbReference>
<dbReference type="GO" id="GO:0005737">
    <property type="term" value="C:cytoplasm"/>
    <property type="evidence" value="ECO:0007669"/>
    <property type="project" value="UniProtKB-SubCell"/>
</dbReference>
<dbReference type="GO" id="GO:0005525">
    <property type="term" value="F:GTP binding"/>
    <property type="evidence" value="ECO:0007669"/>
    <property type="project" value="UniProtKB-UniRule"/>
</dbReference>
<dbReference type="GO" id="GO:0003924">
    <property type="term" value="F:GTPase activity"/>
    <property type="evidence" value="ECO:0007669"/>
    <property type="project" value="UniProtKB-UniRule"/>
</dbReference>
<dbReference type="GO" id="GO:0046872">
    <property type="term" value="F:metal ion binding"/>
    <property type="evidence" value="ECO:0007669"/>
    <property type="project" value="UniProtKB-KW"/>
</dbReference>
<dbReference type="GO" id="GO:0019843">
    <property type="term" value="F:rRNA binding"/>
    <property type="evidence" value="ECO:0007669"/>
    <property type="project" value="UniProtKB-KW"/>
</dbReference>
<dbReference type="GO" id="GO:0042274">
    <property type="term" value="P:ribosomal small subunit biogenesis"/>
    <property type="evidence" value="ECO:0007669"/>
    <property type="project" value="UniProtKB-UniRule"/>
</dbReference>
<dbReference type="CDD" id="cd04466">
    <property type="entry name" value="S1_YloQ_GTPase"/>
    <property type="match status" value="1"/>
</dbReference>
<dbReference type="CDD" id="cd01854">
    <property type="entry name" value="YjeQ_EngC"/>
    <property type="match status" value="1"/>
</dbReference>
<dbReference type="Gene3D" id="2.40.50.140">
    <property type="entry name" value="Nucleic acid-binding proteins"/>
    <property type="match status" value="1"/>
</dbReference>
<dbReference type="Gene3D" id="3.40.50.300">
    <property type="entry name" value="P-loop containing nucleotide triphosphate hydrolases"/>
    <property type="match status" value="1"/>
</dbReference>
<dbReference type="Gene3D" id="1.10.40.50">
    <property type="entry name" value="Probable gtpase engc, domain 3"/>
    <property type="match status" value="1"/>
</dbReference>
<dbReference type="HAMAP" id="MF_01820">
    <property type="entry name" value="GTPase_RsgA"/>
    <property type="match status" value="1"/>
</dbReference>
<dbReference type="InterPro" id="IPR030378">
    <property type="entry name" value="G_CP_dom"/>
</dbReference>
<dbReference type="InterPro" id="IPR012340">
    <property type="entry name" value="NA-bd_OB-fold"/>
</dbReference>
<dbReference type="InterPro" id="IPR027417">
    <property type="entry name" value="P-loop_NTPase"/>
</dbReference>
<dbReference type="InterPro" id="IPR004881">
    <property type="entry name" value="Ribosome_biogen_GTPase_RsgA"/>
</dbReference>
<dbReference type="InterPro" id="IPR010914">
    <property type="entry name" value="RsgA_GTPase_dom"/>
</dbReference>
<dbReference type="InterPro" id="IPR031944">
    <property type="entry name" value="RsgA_N"/>
</dbReference>
<dbReference type="NCBIfam" id="TIGR00157">
    <property type="entry name" value="ribosome small subunit-dependent GTPase A"/>
    <property type="match status" value="1"/>
</dbReference>
<dbReference type="PANTHER" id="PTHR32120">
    <property type="entry name" value="SMALL RIBOSOMAL SUBUNIT BIOGENESIS GTPASE RSGA"/>
    <property type="match status" value="1"/>
</dbReference>
<dbReference type="PANTHER" id="PTHR32120:SF11">
    <property type="entry name" value="SMALL RIBOSOMAL SUBUNIT BIOGENESIS GTPASE RSGA 1, MITOCHONDRIAL-RELATED"/>
    <property type="match status" value="1"/>
</dbReference>
<dbReference type="Pfam" id="PF03193">
    <property type="entry name" value="RsgA_GTPase"/>
    <property type="match status" value="1"/>
</dbReference>
<dbReference type="Pfam" id="PF16745">
    <property type="entry name" value="RsgA_N"/>
    <property type="match status" value="1"/>
</dbReference>
<dbReference type="SUPFAM" id="SSF50249">
    <property type="entry name" value="Nucleic acid-binding proteins"/>
    <property type="match status" value="1"/>
</dbReference>
<dbReference type="SUPFAM" id="SSF52540">
    <property type="entry name" value="P-loop containing nucleoside triphosphate hydrolases"/>
    <property type="match status" value="1"/>
</dbReference>
<dbReference type="PROSITE" id="PS50936">
    <property type="entry name" value="ENGC_GTPASE"/>
    <property type="match status" value="1"/>
</dbReference>
<dbReference type="PROSITE" id="PS51721">
    <property type="entry name" value="G_CP"/>
    <property type="match status" value="1"/>
</dbReference>
<sequence>MEGIILKGIGGFYYVKTEERVYECKARGKFRNKKLTPMVGDRVIITPNDNNYGAIEEICTRDNYLIRPQVANISQAFIVFALKNPDVNLDLLNKFLIQCELKNIKSIVCFNKIDLYGDYENHEAVKMVSDAGYDYIFLKAKEETNLDELKSKLKGNINVFCGPSGVGKSTILNKLVGKEVMETGIISERLKRGKHTTRHSELVEVNNGFVVDTPGFSTLDLKFDSKEELKDYFREFYEYKDQCKFNGCLHHKEPKCGVKDAVNNEEINKDRYEFYVKTLEEIIQGGRNKW</sequence>
<evidence type="ECO:0000255" key="1">
    <source>
        <dbReference type="HAMAP-Rule" id="MF_01820"/>
    </source>
</evidence>
<evidence type="ECO:0000255" key="2">
    <source>
        <dbReference type="PROSITE-ProRule" id="PRU01058"/>
    </source>
</evidence>
<proteinExistence type="inferred from homology"/>
<organism>
    <name type="scientific">Clostridium novyi (strain NT)</name>
    <dbReference type="NCBI Taxonomy" id="386415"/>
    <lineage>
        <taxon>Bacteria</taxon>
        <taxon>Bacillati</taxon>
        <taxon>Bacillota</taxon>
        <taxon>Clostridia</taxon>
        <taxon>Eubacteriales</taxon>
        <taxon>Clostridiaceae</taxon>
        <taxon>Clostridium</taxon>
    </lineage>
</organism>